<protein>
    <recommendedName>
        <fullName evidence="1">Large ribosomal subunit protein bL19</fullName>
    </recommendedName>
    <alternativeName>
        <fullName evidence="2">50S ribosomal protein L19</fullName>
    </alternativeName>
</protein>
<evidence type="ECO:0000255" key="1">
    <source>
        <dbReference type="HAMAP-Rule" id="MF_00402"/>
    </source>
</evidence>
<evidence type="ECO:0000305" key="2"/>
<keyword id="KW-0687">Ribonucleoprotein</keyword>
<keyword id="KW-0689">Ribosomal protein</keyword>
<comment type="function">
    <text evidence="1">This protein is located at the 30S-50S ribosomal subunit interface and may play a role in the structure and function of the aminoacyl-tRNA binding site.</text>
</comment>
<comment type="similarity">
    <text evidence="1">Belongs to the bacterial ribosomal protein bL19 family.</text>
</comment>
<organism>
    <name type="scientific">Buchnera aphidicola subsp. Schizaphis graminum (strain Sg)</name>
    <dbReference type="NCBI Taxonomy" id="198804"/>
    <lineage>
        <taxon>Bacteria</taxon>
        <taxon>Pseudomonadati</taxon>
        <taxon>Pseudomonadota</taxon>
        <taxon>Gammaproteobacteria</taxon>
        <taxon>Enterobacterales</taxon>
        <taxon>Erwiniaceae</taxon>
        <taxon>Buchnera</taxon>
    </lineage>
</organism>
<feature type="chain" id="PRO_0000163427" description="Large ribosomal subunit protein bL19">
    <location>
        <begin position="1"/>
        <end position="115"/>
    </location>
</feature>
<dbReference type="EMBL" id="AE013218">
    <property type="protein sequence ID" value="AAM67936.1"/>
    <property type="molecule type" value="Genomic_DNA"/>
</dbReference>
<dbReference type="RefSeq" id="WP_011053903.1">
    <property type="nucleotide sequence ID" value="NC_004061.1"/>
</dbReference>
<dbReference type="SMR" id="Q8K9F3"/>
<dbReference type="STRING" id="198804.BUsg_384"/>
<dbReference type="GeneID" id="93003853"/>
<dbReference type="KEGG" id="bas:BUsg_384"/>
<dbReference type="eggNOG" id="COG0335">
    <property type="taxonomic scope" value="Bacteria"/>
</dbReference>
<dbReference type="HOGENOM" id="CLU_103507_2_2_6"/>
<dbReference type="Proteomes" id="UP000000416">
    <property type="component" value="Chromosome"/>
</dbReference>
<dbReference type="GO" id="GO:0022625">
    <property type="term" value="C:cytosolic large ribosomal subunit"/>
    <property type="evidence" value="ECO:0007669"/>
    <property type="project" value="TreeGrafter"/>
</dbReference>
<dbReference type="GO" id="GO:0003735">
    <property type="term" value="F:structural constituent of ribosome"/>
    <property type="evidence" value="ECO:0007669"/>
    <property type="project" value="InterPro"/>
</dbReference>
<dbReference type="GO" id="GO:0006412">
    <property type="term" value="P:translation"/>
    <property type="evidence" value="ECO:0007669"/>
    <property type="project" value="UniProtKB-UniRule"/>
</dbReference>
<dbReference type="FunFam" id="2.30.30.790:FF:000001">
    <property type="entry name" value="50S ribosomal protein L19"/>
    <property type="match status" value="1"/>
</dbReference>
<dbReference type="Gene3D" id="2.30.30.790">
    <property type="match status" value="1"/>
</dbReference>
<dbReference type="HAMAP" id="MF_00402">
    <property type="entry name" value="Ribosomal_bL19"/>
    <property type="match status" value="1"/>
</dbReference>
<dbReference type="InterPro" id="IPR001857">
    <property type="entry name" value="Ribosomal_bL19"/>
</dbReference>
<dbReference type="InterPro" id="IPR018257">
    <property type="entry name" value="Ribosomal_bL19_CS"/>
</dbReference>
<dbReference type="InterPro" id="IPR038657">
    <property type="entry name" value="Ribosomal_bL19_sf"/>
</dbReference>
<dbReference type="InterPro" id="IPR008991">
    <property type="entry name" value="Translation_prot_SH3-like_sf"/>
</dbReference>
<dbReference type="NCBIfam" id="TIGR01024">
    <property type="entry name" value="rplS_bact"/>
    <property type="match status" value="1"/>
</dbReference>
<dbReference type="PANTHER" id="PTHR15680:SF9">
    <property type="entry name" value="LARGE RIBOSOMAL SUBUNIT PROTEIN BL19M"/>
    <property type="match status" value="1"/>
</dbReference>
<dbReference type="PANTHER" id="PTHR15680">
    <property type="entry name" value="RIBOSOMAL PROTEIN L19"/>
    <property type="match status" value="1"/>
</dbReference>
<dbReference type="Pfam" id="PF01245">
    <property type="entry name" value="Ribosomal_L19"/>
    <property type="match status" value="1"/>
</dbReference>
<dbReference type="PIRSF" id="PIRSF002191">
    <property type="entry name" value="Ribosomal_L19"/>
    <property type="match status" value="1"/>
</dbReference>
<dbReference type="PRINTS" id="PR00061">
    <property type="entry name" value="RIBOSOMALL19"/>
</dbReference>
<dbReference type="SUPFAM" id="SSF50104">
    <property type="entry name" value="Translation proteins SH3-like domain"/>
    <property type="match status" value="1"/>
</dbReference>
<dbReference type="PROSITE" id="PS01015">
    <property type="entry name" value="RIBOSOMAL_L19"/>
    <property type="match status" value="1"/>
</dbReference>
<proteinExistence type="inferred from homology"/>
<name>RL19_BUCAP</name>
<sequence>MTNIIQEIEQEQLKENIPHFRPGDTVEVKVWVIEGSKKRLQSFEGIVISIKNRSLNSSFTVRKVSNGEGIERVFQTHSYSIDSIFVKRKGKVRKAKLYYLRTRTGKSARIKERIE</sequence>
<reference key="1">
    <citation type="journal article" date="2002" name="Science">
        <title>50 million years of genomic stasis in endosymbiotic bacteria.</title>
        <authorList>
            <person name="Tamas I."/>
            <person name="Klasson L."/>
            <person name="Canbaeck B."/>
            <person name="Naeslund A.K."/>
            <person name="Eriksson A.-S."/>
            <person name="Wernegreen J.J."/>
            <person name="Sandstroem J.P."/>
            <person name="Moran N.A."/>
            <person name="Andersson S.G.E."/>
        </authorList>
    </citation>
    <scope>NUCLEOTIDE SEQUENCE [LARGE SCALE GENOMIC DNA]</scope>
    <source>
        <strain>Sg</strain>
    </source>
</reference>
<gene>
    <name evidence="1" type="primary">rplS</name>
    <name type="ordered locus">BUsg_384</name>
</gene>
<accession>Q8K9F3</accession>